<reference key="1">
    <citation type="journal article" date="2007" name="PLoS Genet.">
        <title>Patterns and implications of gene gain and loss in the evolution of Prochlorococcus.</title>
        <authorList>
            <person name="Kettler G.C."/>
            <person name="Martiny A.C."/>
            <person name="Huang K."/>
            <person name="Zucker J."/>
            <person name="Coleman M.L."/>
            <person name="Rodrigue S."/>
            <person name="Chen F."/>
            <person name="Lapidus A."/>
            <person name="Ferriera S."/>
            <person name="Johnson J."/>
            <person name="Steglich C."/>
            <person name="Church G.M."/>
            <person name="Richardson P."/>
            <person name="Chisholm S.W."/>
        </authorList>
    </citation>
    <scope>NUCLEOTIDE SEQUENCE [LARGE SCALE GENOMIC DNA]</scope>
    <source>
        <strain>MIT 9515</strain>
    </source>
</reference>
<protein>
    <recommendedName>
        <fullName evidence="1">Ribosome-recycling factor</fullName>
        <shortName evidence="1">RRF</shortName>
    </recommendedName>
    <alternativeName>
        <fullName evidence="1">Ribosome-releasing factor</fullName>
    </alternativeName>
</protein>
<accession>A2BVI3</accession>
<name>RRF_PROM5</name>
<proteinExistence type="inferred from homology"/>
<gene>
    <name evidence="1" type="primary">frr</name>
    <name type="ordered locus">P9515_05851</name>
</gene>
<comment type="function">
    <text evidence="1">Responsible for the release of ribosomes from messenger RNA at the termination of protein biosynthesis. May increase the efficiency of translation by recycling ribosomes from one round of translation to another.</text>
</comment>
<comment type="subcellular location">
    <subcellularLocation>
        <location evidence="1">Cytoplasm</location>
    </subcellularLocation>
</comment>
<comment type="similarity">
    <text evidence="1">Belongs to the RRF family.</text>
</comment>
<organism>
    <name type="scientific">Prochlorococcus marinus (strain MIT 9515)</name>
    <dbReference type="NCBI Taxonomy" id="167542"/>
    <lineage>
        <taxon>Bacteria</taxon>
        <taxon>Bacillati</taxon>
        <taxon>Cyanobacteriota</taxon>
        <taxon>Cyanophyceae</taxon>
        <taxon>Synechococcales</taxon>
        <taxon>Prochlorococcaceae</taxon>
        <taxon>Prochlorococcus</taxon>
    </lineage>
</organism>
<dbReference type="EMBL" id="CP000552">
    <property type="protein sequence ID" value="ABM71794.1"/>
    <property type="molecule type" value="Genomic_DNA"/>
</dbReference>
<dbReference type="RefSeq" id="WP_011819901.1">
    <property type="nucleotide sequence ID" value="NC_008817.1"/>
</dbReference>
<dbReference type="SMR" id="A2BVI3"/>
<dbReference type="STRING" id="167542.P9515_05851"/>
<dbReference type="GeneID" id="60201568"/>
<dbReference type="KEGG" id="pmc:P9515_05851"/>
<dbReference type="eggNOG" id="COG0233">
    <property type="taxonomic scope" value="Bacteria"/>
</dbReference>
<dbReference type="HOGENOM" id="CLU_073981_2_0_3"/>
<dbReference type="OrthoDB" id="9804006at2"/>
<dbReference type="Proteomes" id="UP000001589">
    <property type="component" value="Chromosome"/>
</dbReference>
<dbReference type="GO" id="GO:0005737">
    <property type="term" value="C:cytoplasm"/>
    <property type="evidence" value="ECO:0007669"/>
    <property type="project" value="UniProtKB-SubCell"/>
</dbReference>
<dbReference type="GO" id="GO:0043023">
    <property type="term" value="F:ribosomal large subunit binding"/>
    <property type="evidence" value="ECO:0007669"/>
    <property type="project" value="TreeGrafter"/>
</dbReference>
<dbReference type="GO" id="GO:0006415">
    <property type="term" value="P:translational termination"/>
    <property type="evidence" value="ECO:0007669"/>
    <property type="project" value="UniProtKB-UniRule"/>
</dbReference>
<dbReference type="CDD" id="cd00520">
    <property type="entry name" value="RRF"/>
    <property type="match status" value="1"/>
</dbReference>
<dbReference type="FunFam" id="1.10.132.20:FF:000001">
    <property type="entry name" value="Ribosome-recycling factor"/>
    <property type="match status" value="1"/>
</dbReference>
<dbReference type="FunFam" id="3.30.1360.40:FF:000001">
    <property type="entry name" value="Ribosome-recycling factor"/>
    <property type="match status" value="1"/>
</dbReference>
<dbReference type="Gene3D" id="3.30.1360.40">
    <property type="match status" value="1"/>
</dbReference>
<dbReference type="Gene3D" id="1.10.132.20">
    <property type="entry name" value="Ribosome-recycling factor"/>
    <property type="match status" value="1"/>
</dbReference>
<dbReference type="HAMAP" id="MF_00040">
    <property type="entry name" value="RRF"/>
    <property type="match status" value="1"/>
</dbReference>
<dbReference type="InterPro" id="IPR002661">
    <property type="entry name" value="Ribosome_recyc_fac"/>
</dbReference>
<dbReference type="InterPro" id="IPR023584">
    <property type="entry name" value="Ribosome_recyc_fac_dom"/>
</dbReference>
<dbReference type="InterPro" id="IPR036191">
    <property type="entry name" value="RRF_sf"/>
</dbReference>
<dbReference type="NCBIfam" id="TIGR00496">
    <property type="entry name" value="frr"/>
    <property type="match status" value="1"/>
</dbReference>
<dbReference type="PANTHER" id="PTHR20982:SF3">
    <property type="entry name" value="MITOCHONDRIAL RIBOSOME RECYCLING FACTOR PSEUDO 1"/>
    <property type="match status" value="1"/>
</dbReference>
<dbReference type="PANTHER" id="PTHR20982">
    <property type="entry name" value="RIBOSOME RECYCLING FACTOR"/>
    <property type="match status" value="1"/>
</dbReference>
<dbReference type="Pfam" id="PF01765">
    <property type="entry name" value="RRF"/>
    <property type="match status" value="1"/>
</dbReference>
<dbReference type="SUPFAM" id="SSF55194">
    <property type="entry name" value="Ribosome recycling factor, RRF"/>
    <property type="match status" value="1"/>
</dbReference>
<feature type="chain" id="PRO_1000003224" description="Ribosome-recycling factor">
    <location>
        <begin position="1"/>
        <end position="182"/>
    </location>
</feature>
<sequence length="182" mass="20612">MKEQEIQSSMNKSVEATQRNFNTIRTGRANASLLDRISVEYYGAETPIKSLASIATVDSQTISIQPFDISCLQAIEKAISMSDLGITPNNDGKVIRINVPPLTEERRKEFCKLASKYAEEGKVALRNIRRDAVDKEKKDEKEGLISIDESRDNQLEIQKFTDKYISLIETKLSEKEKEILKV</sequence>
<evidence type="ECO:0000255" key="1">
    <source>
        <dbReference type="HAMAP-Rule" id="MF_00040"/>
    </source>
</evidence>
<keyword id="KW-0963">Cytoplasm</keyword>
<keyword id="KW-0648">Protein biosynthesis</keyword>